<organism>
    <name type="scientific">Prochlorococcus marinus (strain MIT 9211)</name>
    <dbReference type="NCBI Taxonomy" id="93059"/>
    <lineage>
        <taxon>Bacteria</taxon>
        <taxon>Bacillati</taxon>
        <taxon>Cyanobacteriota</taxon>
        <taxon>Cyanophyceae</taxon>
        <taxon>Synechococcales</taxon>
        <taxon>Prochlorococcaceae</taxon>
        <taxon>Prochlorococcus</taxon>
    </lineage>
</organism>
<proteinExistence type="inferred from homology"/>
<dbReference type="EC" id="2.1.2.3" evidence="1"/>
<dbReference type="EC" id="3.5.4.10" evidence="1"/>
<dbReference type="EMBL" id="CP000878">
    <property type="protein sequence ID" value="ABX08224.1"/>
    <property type="molecule type" value="Genomic_DNA"/>
</dbReference>
<dbReference type="RefSeq" id="WP_012194849.1">
    <property type="nucleotide sequence ID" value="NC_009976.1"/>
</dbReference>
<dbReference type="SMR" id="A9BDN8"/>
<dbReference type="STRING" id="93059.P9211_02931"/>
<dbReference type="KEGG" id="pmj:P9211_02931"/>
<dbReference type="eggNOG" id="COG0138">
    <property type="taxonomic scope" value="Bacteria"/>
</dbReference>
<dbReference type="HOGENOM" id="CLU_016316_5_2_3"/>
<dbReference type="OrthoDB" id="9802065at2"/>
<dbReference type="UniPathway" id="UPA00074">
    <property type="reaction ID" value="UER00133"/>
</dbReference>
<dbReference type="UniPathway" id="UPA00074">
    <property type="reaction ID" value="UER00135"/>
</dbReference>
<dbReference type="Proteomes" id="UP000000788">
    <property type="component" value="Chromosome"/>
</dbReference>
<dbReference type="GO" id="GO:0005829">
    <property type="term" value="C:cytosol"/>
    <property type="evidence" value="ECO:0007669"/>
    <property type="project" value="TreeGrafter"/>
</dbReference>
<dbReference type="GO" id="GO:0003937">
    <property type="term" value="F:IMP cyclohydrolase activity"/>
    <property type="evidence" value="ECO:0007669"/>
    <property type="project" value="UniProtKB-UniRule"/>
</dbReference>
<dbReference type="GO" id="GO:0004643">
    <property type="term" value="F:phosphoribosylaminoimidazolecarboxamide formyltransferase activity"/>
    <property type="evidence" value="ECO:0007669"/>
    <property type="project" value="UniProtKB-UniRule"/>
</dbReference>
<dbReference type="GO" id="GO:0006189">
    <property type="term" value="P:'de novo' IMP biosynthetic process"/>
    <property type="evidence" value="ECO:0007669"/>
    <property type="project" value="UniProtKB-UniRule"/>
</dbReference>
<dbReference type="CDD" id="cd01421">
    <property type="entry name" value="IMPCH"/>
    <property type="match status" value="1"/>
</dbReference>
<dbReference type="FunFam" id="3.40.140.20:FF:000001">
    <property type="entry name" value="Bifunctional purine biosynthesis protein PurH"/>
    <property type="match status" value="1"/>
</dbReference>
<dbReference type="FunFam" id="3.40.50.1380:FF:000001">
    <property type="entry name" value="Bifunctional purine biosynthesis protein PurH"/>
    <property type="match status" value="1"/>
</dbReference>
<dbReference type="Gene3D" id="3.40.140.20">
    <property type="match status" value="2"/>
</dbReference>
<dbReference type="Gene3D" id="3.40.50.1380">
    <property type="entry name" value="Methylglyoxal synthase-like domain"/>
    <property type="match status" value="1"/>
</dbReference>
<dbReference type="HAMAP" id="MF_00139">
    <property type="entry name" value="PurH"/>
    <property type="match status" value="1"/>
</dbReference>
<dbReference type="InterPro" id="IPR024051">
    <property type="entry name" value="AICAR_Tfase_dup_dom_sf"/>
</dbReference>
<dbReference type="InterPro" id="IPR016193">
    <property type="entry name" value="Cytidine_deaminase-like"/>
</dbReference>
<dbReference type="InterPro" id="IPR011607">
    <property type="entry name" value="MGS-like_dom"/>
</dbReference>
<dbReference type="InterPro" id="IPR036914">
    <property type="entry name" value="MGS-like_dom_sf"/>
</dbReference>
<dbReference type="InterPro" id="IPR002695">
    <property type="entry name" value="PurH-like"/>
</dbReference>
<dbReference type="NCBIfam" id="NF002049">
    <property type="entry name" value="PRK00881.1"/>
    <property type="match status" value="1"/>
</dbReference>
<dbReference type="NCBIfam" id="TIGR00355">
    <property type="entry name" value="purH"/>
    <property type="match status" value="1"/>
</dbReference>
<dbReference type="PANTHER" id="PTHR11692:SF0">
    <property type="entry name" value="BIFUNCTIONAL PURINE BIOSYNTHESIS PROTEIN ATIC"/>
    <property type="match status" value="1"/>
</dbReference>
<dbReference type="PANTHER" id="PTHR11692">
    <property type="entry name" value="BIFUNCTIONAL PURINE BIOSYNTHESIS PROTEIN PURH"/>
    <property type="match status" value="1"/>
</dbReference>
<dbReference type="Pfam" id="PF01808">
    <property type="entry name" value="AICARFT_IMPCHas"/>
    <property type="match status" value="1"/>
</dbReference>
<dbReference type="Pfam" id="PF02142">
    <property type="entry name" value="MGS"/>
    <property type="match status" value="1"/>
</dbReference>
<dbReference type="PIRSF" id="PIRSF000414">
    <property type="entry name" value="AICARFT_IMPCHas"/>
    <property type="match status" value="1"/>
</dbReference>
<dbReference type="SMART" id="SM00798">
    <property type="entry name" value="AICARFT_IMPCHas"/>
    <property type="match status" value="1"/>
</dbReference>
<dbReference type="SMART" id="SM00851">
    <property type="entry name" value="MGS"/>
    <property type="match status" value="1"/>
</dbReference>
<dbReference type="SUPFAM" id="SSF53927">
    <property type="entry name" value="Cytidine deaminase-like"/>
    <property type="match status" value="1"/>
</dbReference>
<dbReference type="SUPFAM" id="SSF52335">
    <property type="entry name" value="Methylglyoxal synthase-like"/>
    <property type="match status" value="1"/>
</dbReference>
<dbReference type="PROSITE" id="PS51855">
    <property type="entry name" value="MGS"/>
    <property type="match status" value="1"/>
</dbReference>
<evidence type="ECO:0000255" key="1">
    <source>
        <dbReference type="HAMAP-Rule" id="MF_00139"/>
    </source>
</evidence>
<evidence type="ECO:0000255" key="2">
    <source>
        <dbReference type="PROSITE-ProRule" id="PRU01202"/>
    </source>
</evidence>
<feature type="chain" id="PRO_1000096082" description="Bifunctional purine biosynthesis protein PurH">
    <location>
        <begin position="1"/>
        <end position="518"/>
    </location>
</feature>
<feature type="domain" description="MGS-like" evidence="2">
    <location>
        <begin position="1"/>
        <end position="146"/>
    </location>
</feature>
<name>PUR9_PROM4</name>
<comment type="catalytic activity">
    <reaction evidence="1">
        <text>(6R)-10-formyltetrahydrofolate + 5-amino-1-(5-phospho-beta-D-ribosyl)imidazole-4-carboxamide = 5-formamido-1-(5-phospho-D-ribosyl)imidazole-4-carboxamide + (6S)-5,6,7,8-tetrahydrofolate</text>
        <dbReference type="Rhea" id="RHEA:22192"/>
        <dbReference type="ChEBI" id="CHEBI:57453"/>
        <dbReference type="ChEBI" id="CHEBI:58467"/>
        <dbReference type="ChEBI" id="CHEBI:58475"/>
        <dbReference type="ChEBI" id="CHEBI:195366"/>
        <dbReference type="EC" id="2.1.2.3"/>
    </reaction>
</comment>
<comment type="catalytic activity">
    <reaction evidence="1">
        <text>IMP + H2O = 5-formamido-1-(5-phospho-D-ribosyl)imidazole-4-carboxamide</text>
        <dbReference type="Rhea" id="RHEA:18445"/>
        <dbReference type="ChEBI" id="CHEBI:15377"/>
        <dbReference type="ChEBI" id="CHEBI:58053"/>
        <dbReference type="ChEBI" id="CHEBI:58467"/>
        <dbReference type="EC" id="3.5.4.10"/>
    </reaction>
</comment>
<comment type="pathway">
    <text evidence="1">Purine metabolism; IMP biosynthesis via de novo pathway; 5-formamido-1-(5-phospho-D-ribosyl)imidazole-4-carboxamide from 5-amino-1-(5-phospho-D-ribosyl)imidazole-4-carboxamide (10-formyl THF route): step 1/1.</text>
</comment>
<comment type="pathway">
    <text evidence="1">Purine metabolism; IMP biosynthesis via de novo pathway; IMP from 5-formamido-1-(5-phospho-D-ribosyl)imidazole-4-carboxamide: step 1/1.</text>
</comment>
<comment type="domain">
    <text evidence="1">The IMP cyclohydrolase activity resides in the N-terminal region.</text>
</comment>
<comment type="similarity">
    <text evidence="1">Belongs to the PurH family.</text>
</comment>
<keyword id="KW-0378">Hydrolase</keyword>
<keyword id="KW-0511">Multifunctional enzyme</keyword>
<keyword id="KW-0658">Purine biosynthesis</keyword>
<keyword id="KW-1185">Reference proteome</keyword>
<keyword id="KW-0808">Transferase</keyword>
<gene>
    <name evidence="1" type="primary">purH</name>
    <name type="ordered locus">P9211_02931</name>
</gene>
<accession>A9BDN8</accession>
<reference key="1">
    <citation type="journal article" date="2007" name="PLoS Genet.">
        <title>Patterns and implications of gene gain and loss in the evolution of Prochlorococcus.</title>
        <authorList>
            <person name="Kettler G.C."/>
            <person name="Martiny A.C."/>
            <person name="Huang K."/>
            <person name="Zucker J."/>
            <person name="Coleman M.L."/>
            <person name="Rodrigue S."/>
            <person name="Chen F."/>
            <person name="Lapidus A."/>
            <person name="Ferriera S."/>
            <person name="Johnson J."/>
            <person name="Steglich C."/>
            <person name="Church G.M."/>
            <person name="Richardson P."/>
            <person name="Chisholm S.W."/>
        </authorList>
    </citation>
    <scope>NUCLEOTIDE SEQUENCE [LARGE SCALE GENOMIC DNA]</scope>
    <source>
        <strain>MIT 9211</strain>
    </source>
</reference>
<protein>
    <recommendedName>
        <fullName evidence="1">Bifunctional purine biosynthesis protein PurH</fullName>
    </recommendedName>
    <domain>
        <recommendedName>
            <fullName evidence="1">Phosphoribosylaminoimidazolecarboxamide formyltransferase</fullName>
            <ecNumber evidence="1">2.1.2.3</ecNumber>
        </recommendedName>
        <alternativeName>
            <fullName evidence="1">AICAR transformylase</fullName>
        </alternativeName>
    </domain>
    <domain>
        <recommendedName>
            <fullName evidence="1">IMP cyclohydrolase</fullName>
            <ecNumber evidence="1">3.5.4.10</ecNumber>
        </recommendedName>
        <alternativeName>
            <fullName evidence="1">ATIC</fullName>
        </alternativeName>
        <alternativeName>
            <fullName evidence="1">IMP synthase</fullName>
        </alternativeName>
        <alternativeName>
            <fullName evidence="1">Inosinicase</fullName>
        </alternativeName>
    </domain>
</protein>
<sequence>MARIALISVSNKDGLIPFAKTLTTLHGFEIISSGGTARALKEANIPVKTVSDYTGAPEILGGRVKTLHPRIHGGILAKQGNSSHQFDLEKENIKNIDLVVVNLYPFQETISDPDVTWDNAIENIDIGGPAMIRAAAKNHESVSILTNPNQYDAFLEKLEAGEISTTIKAKLALEAFEHTASYDIAISQWLSKQIESKYSPYLTSQPIKQTLRYGENPHQNANWYSAVNQGWGQAEQLQGKELSTNNLLDLEAAVATIREFGYDLGNKGNSCEKAAVIIKHTNPCGVAVSNNLSNAFNLALECDSISAFGGIVALNCNLDAATAKELSSLFLECVVAPDYDANALEILSTKKNLRIIKLSHSSIKSSERKYIRSILGGILVQEVDDKLIEPNEWKVPTKLQMSIEDKADLAFAWRVVRHVRSNAIVVASAGQTLGIGAGQMNRIGAAKIALEAAGEKAQGAVLASDGFFPFDDTVHLASRYGIKSIIQPGGSIRDQSSIDACNQLGLSMIFTGKRHFLH</sequence>